<accession>G4RK16</accession>
<accession>O57694</accession>
<name>PFP_THETK</name>
<protein>
    <recommendedName>
        <fullName evidence="1">Pyrophosphate--fructose 6-phosphate 1-phosphotransferase</fullName>
        <ecNumber evidence="1">2.7.1.90</ecNumber>
    </recommendedName>
    <alternativeName>
        <fullName evidence="1">6-phosphofructokinase, pyrophosphate dependent</fullName>
    </alternativeName>
    <alternativeName>
        <fullName evidence="1">PPi-dependent phosphofructokinase</fullName>
        <shortName evidence="1">PPi-PFK</shortName>
    </alternativeName>
    <alternativeName>
        <fullName evidence="1">Pyrophosphate-dependent 6-phosphofructose-1-kinase</fullName>
    </alternativeName>
</protein>
<proteinExistence type="evidence at protein level"/>
<comment type="function">
    <text evidence="1 2">Catalyzes the phosphorylation of D-fructose 6-phosphate, the first committing step of glycolysis. Uses inorganic phosphate (PPi) as phosphoryl donor instead of ATP like common ATP-dependent phosphofructokinases (ATP-PFKs), which renders the reaction reversible, and can thus function both in glycolysis and gluconeogenesis. Consistently, PPi-PFK can replace the enzymes of both the forward (ATP-PFK) and reverse (fructose-bisphosphatase (FBPase)) reactions.</text>
</comment>
<comment type="catalytic activity">
    <reaction evidence="1 2">
        <text>beta-D-fructose 6-phosphate + diphosphate = beta-D-fructose 1,6-bisphosphate + phosphate + H(+)</text>
        <dbReference type="Rhea" id="RHEA:13613"/>
        <dbReference type="ChEBI" id="CHEBI:15378"/>
        <dbReference type="ChEBI" id="CHEBI:32966"/>
        <dbReference type="ChEBI" id="CHEBI:33019"/>
        <dbReference type="ChEBI" id="CHEBI:43474"/>
        <dbReference type="ChEBI" id="CHEBI:57634"/>
        <dbReference type="EC" id="2.7.1.90"/>
    </reaction>
</comment>
<comment type="cofactor">
    <cofactor evidence="1">
        <name>Mg(2+)</name>
        <dbReference type="ChEBI" id="CHEBI:18420"/>
    </cofactor>
</comment>
<comment type="activity regulation">
    <text evidence="1 2">Non-allosteric.</text>
</comment>
<comment type="biophysicochemical properties">
    <kinetics>
        <KM evidence="2">0.023 mM for diphosphate</KM>
        <KM evidence="2">0.053 mM for D-fructose 6-phosphate</KM>
        <KM evidence="2">1.43 mM for phosphate</KM>
        <KM evidence="2">0.033 mM for D-fructose 1,6-bisphosphate</KM>
    </kinetics>
</comment>
<comment type="pathway">
    <text evidence="1">Carbohydrate degradation; glycolysis; D-glyceraldehyde 3-phosphate and glycerone phosphate from D-glucose: step 3/4.</text>
</comment>
<comment type="subunit">
    <text evidence="2">Homodimer or homotrimer.</text>
</comment>
<comment type="subcellular location">
    <subcellularLocation>
        <location evidence="1">Cytoplasm</location>
    </subcellularLocation>
</comment>
<comment type="similarity">
    <text evidence="1">Belongs to the phosphofructokinase type A (PFKA) family. Mixed-substrate PFK group III subfamily.</text>
</comment>
<sequence>MKIGVLTGGGDAPGLNIAVYTFVKLAERKHEVYAIYHGWRGLLNKEVKRVSSRDLLDFAFSGGTYIRTSRTNPFKDEERARLLESNVKELGLDVVVAIGGDDTLGAAGEAQRRGILDAVGIPKTIDNDVYGTDYTIGFDSAVNAAIEATESFKTTLISHERIGVVEVMGREAGWIALFTGLSTMADAVLIPERPASWDSVAKRVKEAYNERRWALVVVSEGIKEYGGPKDEYGHSRLGGVGNELAEYIERSTGIEARAVVLGHTIRGVPPTAFDRILAVRYATAAYEAVENGRYGVMVAYSNGDIAYVPIVDVVGKNRLVSGYWMRLYETYWPDLAG</sequence>
<reference key="1">
    <citation type="journal article" date="1998" name="J. Bacteriol.">
        <title>PPi-dependent phosphofructokinase from Thermoproteus tenax, an archaeal descendant of an ancient line in phosphofructokinase evolution.</title>
        <authorList>
            <person name="Siebers B."/>
            <person name="Klenk H.P."/>
            <person name="Hensel R."/>
        </authorList>
    </citation>
    <scope>NUCLEOTIDE SEQUENCE [GENOMIC DNA]</scope>
    <scope>PROTEIN SEQUENCE OF 1-50</scope>
    <scope>FUNCTION</scope>
    <scope>CATALYTIC ACTIVITY</scope>
    <scope>SUBUNIT</scope>
    <scope>BIOPHYSICOCHEMICAL PROPERTIES</scope>
    <scope>ACTIVITY REGULATION</scope>
    <source>
        <strain>ATCC 35583 / DSM 2078 / JCM 9277 / NBRC 100435 / Kra 1</strain>
    </source>
</reference>
<reference key="2">
    <citation type="journal article" date="2011" name="PLoS ONE">
        <title>The complete genome sequence of Thermoproteus tenax: a physiologically versatile member of the Crenarchaeota.</title>
        <authorList>
            <person name="Siebers B."/>
            <person name="Zaparty M."/>
            <person name="Raddatz G."/>
            <person name="Tjaden B."/>
            <person name="Albers S.V."/>
            <person name="Bell S.D."/>
            <person name="Blombach F."/>
            <person name="Kletzin A."/>
            <person name="Kyrpides N."/>
            <person name="Lanz C."/>
            <person name="Plagens A."/>
            <person name="Rampp M."/>
            <person name="Rosinus A."/>
            <person name="von Jan M."/>
            <person name="Makarova K.S."/>
            <person name="Klenk H.P."/>
            <person name="Schuster S.C."/>
            <person name="Hensel R."/>
        </authorList>
    </citation>
    <scope>NUCLEOTIDE SEQUENCE [LARGE SCALE GENOMIC DNA]</scope>
    <source>
        <strain>ATCC 35583 / DSM 2078 / JCM 9277 / NBRC 100435 / Kra 1</strain>
    </source>
</reference>
<dbReference type="EC" id="2.7.1.90" evidence="1"/>
<dbReference type="EMBL" id="Y14655">
    <property type="protein sequence ID" value="CAA74985.1"/>
    <property type="molecule type" value="Genomic_DNA"/>
</dbReference>
<dbReference type="EMBL" id="FN869859">
    <property type="protein sequence ID" value="CCC81911.1"/>
    <property type="molecule type" value="Genomic_DNA"/>
</dbReference>
<dbReference type="RefSeq" id="WP_014127166.1">
    <property type="nucleotide sequence ID" value="NC_016070.1"/>
</dbReference>
<dbReference type="SMR" id="G4RK16"/>
<dbReference type="STRING" id="768679.TTX_1277"/>
<dbReference type="PaxDb" id="768679-TTX_1277"/>
<dbReference type="GeneID" id="11262156"/>
<dbReference type="KEGG" id="ttn:TTX_1277"/>
<dbReference type="PATRIC" id="fig|768679.9.peg.1291"/>
<dbReference type="eggNOG" id="arCOG03641">
    <property type="taxonomic scope" value="Archaea"/>
</dbReference>
<dbReference type="HOGENOM" id="CLU_020655_0_0_2"/>
<dbReference type="OrthoDB" id="104892at2157"/>
<dbReference type="SABIO-RK" id="G4RK16"/>
<dbReference type="UniPathway" id="UPA00109">
    <property type="reaction ID" value="UER00182"/>
</dbReference>
<dbReference type="Proteomes" id="UP000002654">
    <property type="component" value="Chromosome"/>
</dbReference>
<dbReference type="GO" id="GO:0005945">
    <property type="term" value="C:6-phosphofructokinase complex"/>
    <property type="evidence" value="ECO:0007669"/>
    <property type="project" value="TreeGrafter"/>
</dbReference>
<dbReference type="GO" id="GO:0003872">
    <property type="term" value="F:6-phosphofructokinase activity"/>
    <property type="evidence" value="ECO:0007669"/>
    <property type="project" value="UniProtKB-UniRule"/>
</dbReference>
<dbReference type="GO" id="GO:0016208">
    <property type="term" value="F:AMP binding"/>
    <property type="evidence" value="ECO:0007669"/>
    <property type="project" value="TreeGrafter"/>
</dbReference>
<dbReference type="GO" id="GO:0005524">
    <property type="term" value="F:ATP binding"/>
    <property type="evidence" value="ECO:0007669"/>
    <property type="project" value="InterPro"/>
</dbReference>
<dbReference type="GO" id="GO:0047334">
    <property type="term" value="F:diphosphate-fructose-6-phosphate 1-phosphotransferase activity"/>
    <property type="evidence" value="ECO:0007669"/>
    <property type="project" value="UniProtKB-EC"/>
</dbReference>
<dbReference type="GO" id="GO:0070095">
    <property type="term" value="F:fructose-6-phosphate binding"/>
    <property type="evidence" value="ECO:0007669"/>
    <property type="project" value="TreeGrafter"/>
</dbReference>
<dbReference type="GO" id="GO:0042802">
    <property type="term" value="F:identical protein binding"/>
    <property type="evidence" value="ECO:0007669"/>
    <property type="project" value="TreeGrafter"/>
</dbReference>
<dbReference type="GO" id="GO:0046872">
    <property type="term" value="F:metal ion binding"/>
    <property type="evidence" value="ECO:0007669"/>
    <property type="project" value="UniProtKB-KW"/>
</dbReference>
<dbReference type="GO" id="GO:0048029">
    <property type="term" value="F:monosaccharide binding"/>
    <property type="evidence" value="ECO:0007669"/>
    <property type="project" value="TreeGrafter"/>
</dbReference>
<dbReference type="GO" id="GO:0061621">
    <property type="term" value="P:canonical glycolysis"/>
    <property type="evidence" value="ECO:0007669"/>
    <property type="project" value="TreeGrafter"/>
</dbReference>
<dbReference type="GO" id="GO:0030388">
    <property type="term" value="P:fructose 1,6-bisphosphate metabolic process"/>
    <property type="evidence" value="ECO:0007669"/>
    <property type="project" value="TreeGrafter"/>
</dbReference>
<dbReference type="GO" id="GO:0006002">
    <property type="term" value="P:fructose 6-phosphate metabolic process"/>
    <property type="evidence" value="ECO:0007669"/>
    <property type="project" value="InterPro"/>
</dbReference>
<dbReference type="Gene3D" id="3.40.50.450">
    <property type="match status" value="1"/>
</dbReference>
<dbReference type="Gene3D" id="3.40.50.460">
    <property type="entry name" value="Phosphofructokinase domain"/>
    <property type="match status" value="1"/>
</dbReference>
<dbReference type="HAMAP" id="MF_01976">
    <property type="entry name" value="Phosphofructokinase_III"/>
    <property type="match status" value="1"/>
</dbReference>
<dbReference type="InterPro" id="IPR022953">
    <property type="entry name" value="ATP_PFK"/>
</dbReference>
<dbReference type="InterPro" id="IPR012003">
    <property type="entry name" value="ATP_PFK_prok-type"/>
</dbReference>
<dbReference type="InterPro" id="IPR000023">
    <property type="entry name" value="Phosphofructokinase_dom"/>
</dbReference>
<dbReference type="InterPro" id="IPR012829">
    <property type="entry name" value="Phosphofructokinase_III"/>
</dbReference>
<dbReference type="InterPro" id="IPR035966">
    <property type="entry name" value="PKF_sf"/>
</dbReference>
<dbReference type="NCBIfam" id="NF002872">
    <property type="entry name" value="PRK03202.1"/>
    <property type="match status" value="1"/>
</dbReference>
<dbReference type="PANTHER" id="PTHR13697:SF52">
    <property type="entry name" value="ATP-DEPENDENT 6-PHOSPHOFRUCTOKINASE 3"/>
    <property type="match status" value="1"/>
</dbReference>
<dbReference type="PANTHER" id="PTHR13697">
    <property type="entry name" value="PHOSPHOFRUCTOKINASE"/>
    <property type="match status" value="1"/>
</dbReference>
<dbReference type="Pfam" id="PF00365">
    <property type="entry name" value="PFK"/>
    <property type="match status" value="1"/>
</dbReference>
<dbReference type="PIRSF" id="PIRSF000532">
    <property type="entry name" value="ATP_PFK_prok"/>
    <property type="match status" value="1"/>
</dbReference>
<dbReference type="PRINTS" id="PR00476">
    <property type="entry name" value="PHFRCTKINASE"/>
</dbReference>
<dbReference type="SUPFAM" id="SSF53784">
    <property type="entry name" value="Phosphofructokinase"/>
    <property type="match status" value="1"/>
</dbReference>
<feature type="chain" id="PRO_0000428942" description="Pyrophosphate--fructose 6-phosphate 1-phosphotransferase">
    <location>
        <begin position="1"/>
        <end position="337"/>
    </location>
</feature>
<feature type="active site" description="Proton acceptor" evidence="1">
    <location>
        <position position="126"/>
    </location>
</feature>
<feature type="binding site" evidence="1">
    <location>
        <position position="10"/>
    </location>
    <ligand>
        <name>diphosphate</name>
        <dbReference type="ChEBI" id="CHEBI:33019"/>
    </ligand>
</feature>
<feature type="binding site" evidence="1">
    <location>
        <position position="101"/>
    </location>
    <ligand>
        <name>Mg(2+)</name>
        <dbReference type="ChEBI" id="CHEBI:18420"/>
        <note>catalytic</note>
    </ligand>
</feature>
<feature type="binding site" description="in other chain" evidence="1">
    <location>
        <begin position="124"/>
        <end position="126"/>
    </location>
    <ligand>
        <name>substrate</name>
        <note>ligand shared between dimeric partners</note>
    </ligand>
</feature>
<feature type="binding site" evidence="1">
    <location>
        <position position="161"/>
    </location>
    <ligand>
        <name>substrate</name>
        <note>ligand shared between dimeric partners</note>
    </ligand>
</feature>
<feature type="binding site" description="in other chain" evidence="1">
    <location>
        <begin position="168"/>
        <end position="170"/>
    </location>
    <ligand>
        <name>substrate</name>
        <note>ligand shared between dimeric partners</note>
    </ligand>
</feature>
<feature type="binding site" description="in other chain" evidence="1">
    <location>
        <position position="220"/>
    </location>
    <ligand>
        <name>substrate</name>
        <note>ligand shared between dimeric partners</note>
    </ligand>
</feature>
<feature type="binding site" evidence="1">
    <location>
        <position position="257"/>
    </location>
    <ligand>
        <name>substrate</name>
        <note>ligand shared between dimeric partners</note>
    </ligand>
</feature>
<feature type="binding site" description="in other chain" evidence="1">
    <location>
        <begin position="263"/>
        <end position="266"/>
    </location>
    <ligand>
        <name>substrate</name>
        <note>ligand shared between dimeric partners</note>
    </ligand>
</feature>
<feature type="site" description="Important for catalytic activity and substrate specificity; stabilizes the transition state when the phosphoryl donor is PPi; prevents ATP from binding by mimicking the alpha-phosphate group of ATP" evidence="1">
    <location>
        <position position="102"/>
    </location>
</feature>
<feature type="site" description="Important for catalytic activity; stabilizes the transition state when the phosphoryl donor is PPi" evidence="1">
    <location>
        <position position="123"/>
    </location>
</feature>
<organism>
    <name type="scientific">Thermoproteus tenax (strain ATCC 35583 / DSM 2078 / JCM 9277 / NBRC 100435 / Kra 1)</name>
    <dbReference type="NCBI Taxonomy" id="768679"/>
    <lineage>
        <taxon>Archaea</taxon>
        <taxon>Thermoproteota</taxon>
        <taxon>Thermoprotei</taxon>
        <taxon>Thermoproteales</taxon>
        <taxon>Thermoproteaceae</taxon>
        <taxon>Thermoproteus</taxon>
    </lineage>
</organism>
<gene>
    <name evidence="1" type="primary">pfp</name>
    <name type="ordered locus">TTX_1277</name>
</gene>
<evidence type="ECO:0000255" key="1">
    <source>
        <dbReference type="HAMAP-Rule" id="MF_01976"/>
    </source>
</evidence>
<evidence type="ECO:0000269" key="2">
    <source>
    </source>
</evidence>
<keyword id="KW-0963">Cytoplasm</keyword>
<keyword id="KW-0903">Direct protein sequencing</keyword>
<keyword id="KW-0324">Glycolysis</keyword>
<keyword id="KW-0418">Kinase</keyword>
<keyword id="KW-0460">Magnesium</keyword>
<keyword id="KW-0479">Metal-binding</keyword>
<keyword id="KW-1185">Reference proteome</keyword>
<keyword id="KW-0808">Transferase</keyword>